<comment type="cofactor">
    <cofactor evidence="1">
        <name>Zn(2+)</name>
        <dbReference type="ChEBI" id="CHEBI:29105"/>
    </cofactor>
    <text evidence="1">Binds 3 Zn(2+) ions per subunit.</text>
</comment>
<comment type="similarity">
    <text evidence="1">Belongs to the PHP family.</text>
</comment>
<gene>
    <name type="ordered locus">Ssed_2939</name>
</gene>
<feature type="chain" id="PRO_1000087811" description="Probable phosphatase Ssed_2939">
    <location>
        <begin position="1"/>
        <end position="246"/>
    </location>
</feature>
<feature type="binding site" evidence="1">
    <location>
        <position position="8"/>
    </location>
    <ligand>
        <name>Zn(2+)</name>
        <dbReference type="ChEBI" id="CHEBI:29105"/>
        <label>1</label>
    </ligand>
</feature>
<feature type="binding site" evidence="1">
    <location>
        <position position="10"/>
    </location>
    <ligand>
        <name>Zn(2+)</name>
        <dbReference type="ChEBI" id="CHEBI:29105"/>
        <label>1</label>
    </ligand>
</feature>
<feature type="binding site" evidence="1">
    <location>
        <position position="16"/>
    </location>
    <ligand>
        <name>Zn(2+)</name>
        <dbReference type="ChEBI" id="CHEBI:29105"/>
        <label>2</label>
    </ligand>
</feature>
<feature type="binding site" evidence="1">
    <location>
        <position position="41"/>
    </location>
    <ligand>
        <name>Zn(2+)</name>
        <dbReference type="ChEBI" id="CHEBI:29105"/>
        <label>2</label>
    </ligand>
</feature>
<feature type="binding site" evidence="1">
    <location>
        <position position="74"/>
    </location>
    <ligand>
        <name>Zn(2+)</name>
        <dbReference type="ChEBI" id="CHEBI:29105"/>
        <label>1</label>
    </ligand>
</feature>
<feature type="binding site" evidence="1">
    <location>
        <position position="74"/>
    </location>
    <ligand>
        <name>Zn(2+)</name>
        <dbReference type="ChEBI" id="CHEBI:29105"/>
        <label>3</label>
    </ligand>
</feature>
<feature type="binding site" evidence="1">
    <location>
        <position position="102"/>
    </location>
    <ligand>
        <name>Zn(2+)</name>
        <dbReference type="ChEBI" id="CHEBI:29105"/>
        <label>3</label>
    </ligand>
</feature>
<feature type="binding site" evidence="1">
    <location>
        <position position="132"/>
    </location>
    <ligand>
        <name>Zn(2+)</name>
        <dbReference type="ChEBI" id="CHEBI:29105"/>
        <label>3</label>
    </ligand>
</feature>
<feature type="binding site" evidence="1">
    <location>
        <position position="193"/>
    </location>
    <ligand>
        <name>Zn(2+)</name>
        <dbReference type="ChEBI" id="CHEBI:29105"/>
        <label>1</label>
    </ligand>
</feature>
<feature type="binding site" evidence="1">
    <location>
        <position position="195"/>
    </location>
    <ligand>
        <name>Zn(2+)</name>
        <dbReference type="ChEBI" id="CHEBI:29105"/>
        <label>2</label>
    </ligand>
</feature>
<name>Y2939_SHESH</name>
<sequence>MKYLVDTHAHTIASTHAYSTVHDYIAVAKQKGLKLFAITDHGPDMADAPHFWHFVNLRVLPRIVDGVGILRGIEANIKNDAGEIDYFGDYLQELDIVLAGFHEPVFPPSDKQTHTQALINAIESGNVDIITHPGNPAYPIDITAVAAAAARCHVALEINNSSFEMSRKGSEANCVAIAKAVRDAGGQLVMGSDSHVAFSLGEFSQALAIIEEAEFPEERLLNKSPEALLTFLSKRGHKTLDDFAEL</sequence>
<keyword id="KW-0378">Hydrolase</keyword>
<keyword id="KW-0479">Metal-binding</keyword>
<keyword id="KW-1185">Reference proteome</keyword>
<keyword id="KW-0862">Zinc</keyword>
<protein>
    <recommendedName>
        <fullName evidence="1">Probable phosphatase Ssed_2939</fullName>
        <ecNumber evidence="1">3.1.3.-</ecNumber>
    </recommendedName>
</protein>
<proteinExistence type="inferred from homology"/>
<accession>A8FXH3</accession>
<evidence type="ECO:0000255" key="1">
    <source>
        <dbReference type="HAMAP-Rule" id="MF_01561"/>
    </source>
</evidence>
<dbReference type="EC" id="3.1.3.-" evidence="1"/>
<dbReference type="EMBL" id="CP000821">
    <property type="protein sequence ID" value="ABV37546.1"/>
    <property type="molecule type" value="Genomic_DNA"/>
</dbReference>
<dbReference type="RefSeq" id="WP_012143276.1">
    <property type="nucleotide sequence ID" value="NC_009831.1"/>
</dbReference>
<dbReference type="SMR" id="A8FXH3"/>
<dbReference type="STRING" id="425104.Ssed_2939"/>
<dbReference type="KEGG" id="sse:Ssed_2939"/>
<dbReference type="eggNOG" id="COG1387">
    <property type="taxonomic scope" value="Bacteria"/>
</dbReference>
<dbReference type="HOGENOM" id="CLU_061999_0_1_6"/>
<dbReference type="OrthoDB" id="9808747at2"/>
<dbReference type="Proteomes" id="UP000002015">
    <property type="component" value="Chromosome"/>
</dbReference>
<dbReference type="GO" id="GO:0005829">
    <property type="term" value="C:cytosol"/>
    <property type="evidence" value="ECO:0007669"/>
    <property type="project" value="TreeGrafter"/>
</dbReference>
<dbReference type="GO" id="GO:0016791">
    <property type="term" value="F:phosphatase activity"/>
    <property type="evidence" value="ECO:0007669"/>
    <property type="project" value="UniProtKB-UniRule"/>
</dbReference>
<dbReference type="GO" id="GO:0008270">
    <property type="term" value="F:zinc ion binding"/>
    <property type="evidence" value="ECO:0007669"/>
    <property type="project" value="UniProtKB-UniRule"/>
</dbReference>
<dbReference type="GO" id="GO:0071978">
    <property type="term" value="P:bacterial-type flagellum-dependent swarming motility"/>
    <property type="evidence" value="ECO:0007669"/>
    <property type="project" value="TreeGrafter"/>
</dbReference>
<dbReference type="CDD" id="cd07437">
    <property type="entry name" value="PHP_HisPPase_Ycdx_like"/>
    <property type="match status" value="1"/>
</dbReference>
<dbReference type="FunFam" id="3.20.20.140:FF:000008">
    <property type="entry name" value="Probable phosphatase YcdX"/>
    <property type="match status" value="1"/>
</dbReference>
<dbReference type="Gene3D" id="3.20.20.140">
    <property type="entry name" value="Metal-dependent hydrolases"/>
    <property type="match status" value="1"/>
</dbReference>
<dbReference type="HAMAP" id="MF_01561">
    <property type="entry name" value="YcdX_phosphat"/>
    <property type="match status" value="1"/>
</dbReference>
<dbReference type="InterPro" id="IPR023710">
    <property type="entry name" value="Phosphatase_YcdX_put"/>
</dbReference>
<dbReference type="InterPro" id="IPR004013">
    <property type="entry name" value="PHP_dom"/>
</dbReference>
<dbReference type="InterPro" id="IPR050243">
    <property type="entry name" value="PHP_phosphatase"/>
</dbReference>
<dbReference type="InterPro" id="IPR003141">
    <property type="entry name" value="Pol/His_phosphatase_N"/>
</dbReference>
<dbReference type="InterPro" id="IPR016195">
    <property type="entry name" value="Pol/histidinol_Pase-like"/>
</dbReference>
<dbReference type="NCBIfam" id="NF006702">
    <property type="entry name" value="PRK09248.1"/>
    <property type="match status" value="1"/>
</dbReference>
<dbReference type="PANTHER" id="PTHR36928">
    <property type="entry name" value="PHOSPHATASE YCDX-RELATED"/>
    <property type="match status" value="1"/>
</dbReference>
<dbReference type="PANTHER" id="PTHR36928:SF1">
    <property type="entry name" value="PHOSPHATASE YCDX-RELATED"/>
    <property type="match status" value="1"/>
</dbReference>
<dbReference type="Pfam" id="PF02811">
    <property type="entry name" value="PHP"/>
    <property type="match status" value="1"/>
</dbReference>
<dbReference type="SMART" id="SM00481">
    <property type="entry name" value="POLIIIAc"/>
    <property type="match status" value="1"/>
</dbReference>
<dbReference type="SUPFAM" id="SSF89550">
    <property type="entry name" value="PHP domain-like"/>
    <property type="match status" value="1"/>
</dbReference>
<reference key="1">
    <citation type="submission" date="2007-08" db="EMBL/GenBank/DDBJ databases">
        <title>Complete sequence of Shewanella sediminis HAW-EB3.</title>
        <authorList>
            <consortium name="US DOE Joint Genome Institute"/>
            <person name="Copeland A."/>
            <person name="Lucas S."/>
            <person name="Lapidus A."/>
            <person name="Barry K."/>
            <person name="Glavina del Rio T."/>
            <person name="Dalin E."/>
            <person name="Tice H."/>
            <person name="Pitluck S."/>
            <person name="Chertkov O."/>
            <person name="Brettin T."/>
            <person name="Bruce D."/>
            <person name="Detter J.C."/>
            <person name="Han C."/>
            <person name="Schmutz J."/>
            <person name="Larimer F."/>
            <person name="Land M."/>
            <person name="Hauser L."/>
            <person name="Kyrpides N."/>
            <person name="Kim E."/>
            <person name="Zhao J.-S."/>
            <person name="Richardson P."/>
        </authorList>
    </citation>
    <scope>NUCLEOTIDE SEQUENCE [LARGE SCALE GENOMIC DNA]</scope>
    <source>
        <strain>HAW-EB3</strain>
    </source>
</reference>
<organism>
    <name type="scientific">Shewanella sediminis (strain HAW-EB3)</name>
    <dbReference type="NCBI Taxonomy" id="425104"/>
    <lineage>
        <taxon>Bacteria</taxon>
        <taxon>Pseudomonadati</taxon>
        <taxon>Pseudomonadota</taxon>
        <taxon>Gammaproteobacteria</taxon>
        <taxon>Alteromonadales</taxon>
        <taxon>Shewanellaceae</taxon>
        <taxon>Shewanella</taxon>
    </lineage>
</organism>